<sequence>MAVAPPSYCFVAFPPRAKDGLVVFGKNSARPRDEVQEVVYFSAADHEPESKVECTYISINQVPRTHAIVISRPAWLWGAEMGANEHGVCIANEAINAREPAAETEALLGMDLVRLGLERGATAKEALDVIVALLEEHGQGGNYYEDANSCHSFQSAFLIVDREEAWVLETVGKYWAAEKITEGVKCICNQLSLTTKIDAEHPELRSYAQSQGWWMGEDEFNFSEVFSPADDHLTCCSGRDTLEKQEESITVQTMIDVLRDKASGVCVDSESFLTTASVVSVLPQNGSSPCIHYFTGTPDPSRSIFKPFIFVDDVKLVPKAQSPCFGDDDPAKKEPRFQEKPDRRHELYKAHEWARAVLESDEEQGQKLRKTMLELEKQGLEAMEEILTSSDPLDPTEVGDLFYDCVDTEIKFFK</sequence>
<organism>
    <name type="scientific">Bos taurus</name>
    <name type="common">Bovine</name>
    <dbReference type="NCBI Taxonomy" id="9913"/>
    <lineage>
        <taxon>Eukaryota</taxon>
        <taxon>Metazoa</taxon>
        <taxon>Chordata</taxon>
        <taxon>Craniata</taxon>
        <taxon>Vertebrata</taxon>
        <taxon>Euteleostomi</taxon>
        <taxon>Mammalia</taxon>
        <taxon>Eutheria</taxon>
        <taxon>Laurasiatheria</taxon>
        <taxon>Artiodactyla</taxon>
        <taxon>Ruminantia</taxon>
        <taxon>Pecora</taxon>
        <taxon>Bovidae</taxon>
        <taxon>Bovinae</taxon>
        <taxon>Bos</taxon>
    </lineage>
</organism>
<proteinExistence type="evidence at protein level"/>
<comment type="function">
    <text evidence="3">Regulates exocytosis in mast cells. Increases both the extent of secretion and the sensitivity of mast cells to stimulation with calcium.</text>
</comment>
<comment type="subcellular location">
    <subcellularLocation>
        <location>Cytoplasm</location>
    </subcellularLocation>
</comment>
<comment type="miscellaneous">
    <text evidence="4">'Secern' is an archaic English term meaning 'secrete'.</text>
</comment>
<comment type="similarity">
    <text evidence="4">Belongs to the peptidase C69 family. Secernin subfamily.</text>
</comment>
<feature type="initiator methionine" description="Removed" evidence="1">
    <location>
        <position position="1"/>
    </location>
</feature>
<feature type="chain" id="PRO_0000221435" description="Secernin-1">
    <location>
        <begin position="2"/>
        <end position="414"/>
    </location>
</feature>
<feature type="active site" evidence="2">
    <location>
        <position position="9"/>
    </location>
</feature>
<feature type="modified residue" description="N-acetylalanine" evidence="1">
    <location>
        <position position="2"/>
    </location>
</feature>
<feature type="sequence conflict" description="In Ref. 2; AA sequence." evidence="4" ref="2">
    <original>IS</original>
    <variation>AE</variation>
    <location>
        <begin position="70"/>
        <end position="71"/>
    </location>
</feature>
<name>SCRN1_BOVIN</name>
<gene>
    <name type="primary">SCRN1</name>
</gene>
<accession>P83939</accession>
<evidence type="ECO:0000250" key="1">
    <source>
        <dbReference type="UniProtKB" id="Q12765"/>
    </source>
</evidence>
<evidence type="ECO:0000255" key="2"/>
<evidence type="ECO:0000269" key="3">
    <source>
    </source>
</evidence>
<evidence type="ECO:0000305" key="4"/>
<dbReference type="RefSeq" id="NP_001104273.2">
    <property type="nucleotide sequence ID" value="NM_001110803.2"/>
</dbReference>
<dbReference type="RefSeq" id="XP_010802602.1">
    <property type="nucleotide sequence ID" value="XM_010804300.4"/>
</dbReference>
<dbReference type="RefSeq" id="XP_010802603.1">
    <property type="nucleotide sequence ID" value="XM_010804301.4"/>
</dbReference>
<dbReference type="RefSeq" id="XP_059741640.1">
    <property type="nucleotide sequence ID" value="XM_059885657.1"/>
</dbReference>
<dbReference type="SMR" id="P83939"/>
<dbReference type="FunCoup" id="P83939">
    <property type="interactions" value="1013"/>
</dbReference>
<dbReference type="STRING" id="9913.ENSBTAP00000021588"/>
<dbReference type="PaxDb" id="9913-ENSBTAP00000021588"/>
<dbReference type="Ensembl" id="ENSBTAT00000021588.6">
    <property type="protein sequence ID" value="ENSBTAP00000021588.5"/>
    <property type="gene ID" value="ENSBTAG00000016223.6"/>
</dbReference>
<dbReference type="GeneID" id="534933"/>
<dbReference type="CTD" id="9805"/>
<dbReference type="VEuPathDB" id="HostDB:ENSBTAG00000016223"/>
<dbReference type="VGNC" id="VGNC:34366">
    <property type="gene designation" value="SCRN1"/>
</dbReference>
<dbReference type="eggNOG" id="ENOG502QTSN">
    <property type="taxonomic scope" value="Eukaryota"/>
</dbReference>
<dbReference type="GeneTree" id="ENSGT00390000013474"/>
<dbReference type="HOGENOM" id="CLU_046840_0_0_1"/>
<dbReference type="InParanoid" id="P83939"/>
<dbReference type="OMA" id="HEWARSV"/>
<dbReference type="OrthoDB" id="5175656at2759"/>
<dbReference type="TreeFam" id="TF323890"/>
<dbReference type="Proteomes" id="UP000009136">
    <property type="component" value="Chromosome 4"/>
</dbReference>
<dbReference type="Bgee" id="ENSBTAG00000016223">
    <property type="expression patterns" value="Expressed in prefrontal cortex and 101 other cell types or tissues"/>
</dbReference>
<dbReference type="GO" id="GO:0005737">
    <property type="term" value="C:cytoplasm"/>
    <property type="evidence" value="ECO:0007669"/>
    <property type="project" value="UniProtKB-SubCell"/>
</dbReference>
<dbReference type="GO" id="GO:0031965">
    <property type="term" value="C:nuclear membrane"/>
    <property type="evidence" value="ECO:0007669"/>
    <property type="project" value="Ensembl"/>
</dbReference>
<dbReference type="GO" id="GO:0070004">
    <property type="term" value="F:cysteine-type exopeptidase activity"/>
    <property type="evidence" value="ECO:0007669"/>
    <property type="project" value="InterPro"/>
</dbReference>
<dbReference type="GO" id="GO:0016805">
    <property type="term" value="F:dipeptidase activity"/>
    <property type="evidence" value="ECO:0007669"/>
    <property type="project" value="InterPro"/>
</dbReference>
<dbReference type="GO" id="GO:0006887">
    <property type="term" value="P:exocytosis"/>
    <property type="evidence" value="ECO:0000314"/>
    <property type="project" value="UniProtKB"/>
</dbReference>
<dbReference type="GO" id="GO:0006508">
    <property type="term" value="P:proteolysis"/>
    <property type="evidence" value="ECO:0007669"/>
    <property type="project" value="InterPro"/>
</dbReference>
<dbReference type="FunFam" id="3.60.60.10:FF:000001">
    <property type="entry name" value="Secernin 1"/>
    <property type="match status" value="1"/>
</dbReference>
<dbReference type="Gene3D" id="3.60.60.10">
    <property type="entry name" value="Penicillin V Acylase, Chain A"/>
    <property type="match status" value="1"/>
</dbReference>
<dbReference type="InterPro" id="IPR005322">
    <property type="entry name" value="Peptidase_C69"/>
</dbReference>
<dbReference type="PANTHER" id="PTHR12994">
    <property type="entry name" value="SECERNIN"/>
    <property type="match status" value="1"/>
</dbReference>
<dbReference type="PANTHER" id="PTHR12994:SF7">
    <property type="entry name" value="SECERNIN-1"/>
    <property type="match status" value="1"/>
</dbReference>
<dbReference type="Pfam" id="PF03577">
    <property type="entry name" value="Peptidase_C69"/>
    <property type="match status" value="1"/>
</dbReference>
<keyword id="KW-0007">Acetylation</keyword>
<keyword id="KW-0963">Cytoplasm</keyword>
<keyword id="KW-0903">Direct protein sequencing</keyword>
<keyword id="KW-0268">Exocytosis</keyword>
<keyword id="KW-1185">Reference proteome</keyword>
<protein>
    <recommendedName>
        <fullName>Secernin-1</fullName>
    </recommendedName>
    <alternativeName>
        <fullName>p50</fullName>
    </alternativeName>
</protein>
<reference key="1">
    <citation type="journal article" date="2009" name="Science">
        <title>The genome sequence of taurine cattle: a window to ruminant biology and evolution.</title>
        <authorList>
            <consortium name="The bovine genome sequencing and analysis consortium"/>
        </authorList>
    </citation>
    <scope>NUCLEOTIDE SEQUENCE [LARGE SCALE GENOMIC DNA]</scope>
    <source>
        <strain>Hereford</strain>
    </source>
</reference>
<reference evidence="4" key="2">
    <citation type="journal article" date="2002" name="Mol. Biol. Cell">
        <title>Purification and identification of secernin, a novel cytosolic protein that regulates exocytosis in mast cells.</title>
        <authorList>
            <person name="Way G."/>
            <person name="Morrice N."/>
            <person name="Smythe C."/>
            <person name="O'Sullivan A.J.O."/>
        </authorList>
    </citation>
    <scope>PROTEIN SEQUENCE OF 17-32; 65-72; 99-115; 198-206; 304-315; 337-365 AND 370-377</scope>
    <source>
        <tissue evidence="3">Brain</tissue>
    </source>
</reference>